<dbReference type="EC" id="7.4.2.11" evidence="1"/>
<dbReference type="EMBL" id="AE009442">
    <property type="protein sequence ID" value="AAO29638.1"/>
    <property type="molecule type" value="Genomic_DNA"/>
</dbReference>
<dbReference type="RefSeq" id="WP_011098262.1">
    <property type="nucleotide sequence ID" value="NC_004556.1"/>
</dbReference>
<dbReference type="SMR" id="Q87AL9"/>
<dbReference type="KEGG" id="xft:PD_1804"/>
<dbReference type="HOGENOM" id="CLU_000604_1_3_6"/>
<dbReference type="Proteomes" id="UP000002516">
    <property type="component" value="Chromosome"/>
</dbReference>
<dbReference type="GO" id="GO:0005886">
    <property type="term" value="C:plasma membrane"/>
    <property type="evidence" value="ECO:0007669"/>
    <property type="project" value="UniProtKB-SubCell"/>
</dbReference>
<dbReference type="GO" id="GO:0033232">
    <property type="term" value="F:ABC-type D-methionine transporter activity"/>
    <property type="evidence" value="ECO:0007669"/>
    <property type="project" value="UniProtKB-EC"/>
</dbReference>
<dbReference type="GO" id="GO:0005524">
    <property type="term" value="F:ATP binding"/>
    <property type="evidence" value="ECO:0007669"/>
    <property type="project" value="UniProtKB-KW"/>
</dbReference>
<dbReference type="GO" id="GO:0016887">
    <property type="term" value="F:ATP hydrolysis activity"/>
    <property type="evidence" value="ECO:0007669"/>
    <property type="project" value="InterPro"/>
</dbReference>
<dbReference type="CDD" id="cd03258">
    <property type="entry name" value="ABC_MetN_methionine_transporter"/>
    <property type="match status" value="1"/>
</dbReference>
<dbReference type="FunFam" id="3.40.50.300:FF:000056">
    <property type="entry name" value="Cell division ATP-binding protein FtsE"/>
    <property type="match status" value="1"/>
</dbReference>
<dbReference type="Gene3D" id="3.30.70.260">
    <property type="match status" value="1"/>
</dbReference>
<dbReference type="Gene3D" id="3.40.50.300">
    <property type="entry name" value="P-loop containing nucleotide triphosphate hydrolases"/>
    <property type="match status" value="1"/>
</dbReference>
<dbReference type="InterPro" id="IPR003593">
    <property type="entry name" value="AAA+_ATPase"/>
</dbReference>
<dbReference type="InterPro" id="IPR003439">
    <property type="entry name" value="ABC_transporter-like_ATP-bd"/>
</dbReference>
<dbReference type="InterPro" id="IPR017871">
    <property type="entry name" value="ABC_transporter-like_CS"/>
</dbReference>
<dbReference type="InterPro" id="IPR045865">
    <property type="entry name" value="ACT-like_dom_sf"/>
</dbReference>
<dbReference type="InterPro" id="IPR041701">
    <property type="entry name" value="MetN_ABC"/>
</dbReference>
<dbReference type="InterPro" id="IPR050086">
    <property type="entry name" value="MetN_ABC_transporter-like"/>
</dbReference>
<dbReference type="InterPro" id="IPR018449">
    <property type="entry name" value="NIL_domain"/>
</dbReference>
<dbReference type="InterPro" id="IPR027417">
    <property type="entry name" value="P-loop_NTPase"/>
</dbReference>
<dbReference type="PANTHER" id="PTHR43166">
    <property type="entry name" value="AMINO ACID IMPORT ATP-BINDING PROTEIN"/>
    <property type="match status" value="1"/>
</dbReference>
<dbReference type="PANTHER" id="PTHR43166:SF30">
    <property type="entry name" value="METHIONINE IMPORT ATP-BINDING PROTEIN METN"/>
    <property type="match status" value="1"/>
</dbReference>
<dbReference type="Pfam" id="PF00005">
    <property type="entry name" value="ABC_tran"/>
    <property type="match status" value="1"/>
</dbReference>
<dbReference type="Pfam" id="PF09383">
    <property type="entry name" value="NIL"/>
    <property type="match status" value="1"/>
</dbReference>
<dbReference type="SMART" id="SM00382">
    <property type="entry name" value="AAA"/>
    <property type="match status" value="1"/>
</dbReference>
<dbReference type="SMART" id="SM00930">
    <property type="entry name" value="NIL"/>
    <property type="match status" value="1"/>
</dbReference>
<dbReference type="SUPFAM" id="SSF55021">
    <property type="entry name" value="ACT-like"/>
    <property type="match status" value="1"/>
</dbReference>
<dbReference type="SUPFAM" id="SSF52540">
    <property type="entry name" value="P-loop containing nucleoside triphosphate hydrolases"/>
    <property type="match status" value="1"/>
</dbReference>
<dbReference type="PROSITE" id="PS00211">
    <property type="entry name" value="ABC_TRANSPORTER_1"/>
    <property type="match status" value="1"/>
</dbReference>
<dbReference type="PROSITE" id="PS50893">
    <property type="entry name" value="ABC_TRANSPORTER_2"/>
    <property type="match status" value="1"/>
</dbReference>
<dbReference type="PROSITE" id="PS51264">
    <property type="entry name" value="METN"/>
    <property type="match status" value="1"/>
</dbReference>
<evidence type="ECO:0000255" key="1">
    <source>
        <dbReference type="HAMAP-Rule" id="MF_01719"/>
    </source>
</evidence>
<accession>Q87AL9</accession>
<reference key="1">
    <citation type="journal article" date="2003" name="J. Bacteriol.">
        <title>Comparative analyses of the complete genome sequences of Pierce's disease and citrus variegated chlorosis strains of Xylella fastidiosa.</title>
        <authorList>
            <person name="Van Sluys M.A."/>
            <person name="de Oliveira M.C."/>
            <person name="Monteiro-Vitorello C.B."/>
            <person name="Miyaki C.Y."/>
            <person name="Furlan L.R."/>
            <person name="Camargo L.E.A."/>
            <person name="da Silva A.C.R."/>
            <person name="Moon D.H."/>
            <person name="Takita M.A."/>
            <person name="Lemos E.G.M."/>
            <person name="Machado M.A."/>
            <person name="Ferro M.I.T."/>
            <person name="da Silva F.R."/>
            <person name="Goldman M.H.S."/>
            <person name="Goldman G.H."/>
            <person name="Lemos M.V.F."/>
            <person name="El-Dorry H."/>
            <person name="Tsai S.M."/>
            <person name="Carrer H."/>
            <person name="Carraro D.M."/>
            <person name="de Oliveira R.C."/>
            <person name="Nunes L.R."/>
            <person name="Siqueira W.J."/>
            <person name="Coutinho L.L."/>
            <person name="Kimura E.T."/>
            <person name="Ferro E.S."/>
            <person name="Harakava R."/>
            <person name="Kuramae E.E."/>
            <person name="Marino C.L."/>
            <person name="Giglioti E."/>
            <person name="Abreu I.L."/>
            <person name="Alves L.M.C."/>
            <person name="do Amaral A.M."/>
            <person name="Baia G.S."/>
            <person name="Blanco S.R."/>
            <person name="Brito M.S."/>
            <person name="Cannavan F.S."/>
            <person name="Celestino A.V."/>
            <person name="da Cunha A.F."/>
            <person name="Fenille R.C."/>
            <person name="Ferro J.A."/>
            <person name="Formighieri E.F."/>
            <person name="Kishi L.T."/>
            <person name="Leoni S.G."/>
            <person name="Oliveira A.R."/>
            <person name="Rosa V.E. Jr."/>
            <person name="Sassaki F.T."/>
            <person name="Sena J.A.D."/>
            <person name="de Souza A.A."/>
            <person name="Truffi D."/>
            <person name="Tsukumo F."/>
            <person name="Yanai G.M."/>
            <person name="Zaros L.G."/>
            <person name="Civerolo E.L."/>
            <person name="Simpson A.J.G."/>
            <person name="Almeida N.F. Jr."/>
            <person name="Setubal J.C."/>
            <person name="Kitajima J.P."/>
        </authorList>
    </citation>
    <scope>NUCLEOTIDE SEQUENCE [LARGE SCALE GENOMIC DNA]</scope>
    <source>
        <strain>Temecula1 / ATCC 700964</strain>
    </source>
</reference>
<protein>
    <recommendedName>
        <fullName evidence="1">Methionine import ATP-binding protein MetN</fullName>
        <ecNumber evidence="1">7.4.2.11</ecNumber>
    </recommendedName>
</protein>
<proteinExistence type="inferred from homology"/>
<keyword id="KW-0029">Amino-acid transport</keyword>
<keyword id="KW-0067">ATP-binding</keyword>
<keyword id="KW-0997">Cell inner membrane</keyword>
<keyword id="KW-1003">Cell membrane</keyword>
<keyword id="KW-0472">Membrane</keyword>
<keyword id="KW-0547">Nucleotide-binding</keyword>
<keyword id="KW-1185">Reference proteome</keyword>
<keyword id="KW-1278">Translocase</keyword>
<keyword id="KW-0813">Transport</keyword>
<organism>
    <name type="scientific">Xylella fastidiosa (strain Temecula1 / ATCC 700964)</name>
    <dbReference type="NCBI Taxonomy" id="183190"/>
    <lineage>
        <taxon>Bacteria</taxon>
        <taxon>Pseudomonadati</taxon>
        <taxon>Pseudomonadota</taxon>
        <taxon>Gammaproteobacteria</taxon>
        <taxon>Lysobacterales</taxon>
        <taxon>Lysobacteraceae</taxon>
        <taxon>Xylella</taxon>
    </lineage>
</organism>
<sequence length="335" mass="36561">MIQFKDSYKHYGANGREVTALQPLNLEIRAGEVFGIIGHSGAGKSTMLRMINRLEEPSGGHLLINGQDITVLDRMGLRALRRQIGMIFQHFNLLSSYTVAGNVAFPLKLTGASDAKINARVAELLAWVGLEAHANTYPAQLSGGQKQRVGIARALATRPQILLCDEVTSALDPQTTSTVLQLLARINRELGLTIVLITHEMDVIRRICDRVAVLDTGRLVEIGLVTDVFLHPQHPTTRSFVMETEHIDTSALDQDFALVKGRIVRLTFIGTDTYLPLLGRVARETGVDYNILSGRIDRIKETPYGQLTVALSGGDPVAAQAAFAAAGIHIEELRA</sequence>
<feature type="chain" id="PRO_0000270446" description="Methionine import ATP-binding protein MetN">
    <location>
        <begin position="1"/>
        <end position="335"/>
    </location>
</feature>
<feature type="domain" description="ABC transporter" evidence="1">
    <location>
        <begin position="2"/>
        <end position="241"/>
    </location>
</feature>
<feature type="binding site" evidence="1">
    <location>
        <begin position="38"/>
        <end position="45"/>
    </location>
    <ligand>
        <name>ATP</name>
        <dbReference type="ChEBI" id="CHEBI:30616"/>
    </ligand>
</feature>
<comment type="function">
    <text evidence="1">Part of the ABC transporter complex MetNIQ involved in methionine import. Responsible for energy coupling to the transport system.</text>
</comment>
<comment type="catalytic activity">
    <reaction evidence="1">
        <text>L-methionine(out) + ATP + H2O = L-methionine(in) + ADP + phosphate + H(+)</text>
        <dbReference type="Rhea" id="RHEA:29779"/>
        <dbReference type="ChEBI" id="CHEBI:15377"/>
        <dbReference type="ChEBI" id="CHEBI:15378"/>
        <dbReference type="ChEBI" id="CHEBI:30616"/>
        <dbReference type="ChEBI" id="CHEBI:43474"/>
        <dbReference type="ChEBI" id="CHEBI:57844"/>
        <dbReference type="ChEBI" id="CHEBI:456216"/>
        <dbReference type="EC" id="7.4.2.11"/>
    </reaction>
</comment>
<comment type="catalytic activity">
    <reaction evidence="1">
        <text>D-methionine(out) + ATP + H2O = D-methionine(in) + ADP + phosphate + H(+)</text>
        <dbReference type="Rhea" id="RHEA:29767"/>
        <dbReference type="ChEBI" id="CHEBI:15377"/>
        <dbReference type="ChEBI" id="CHEBI:15378"/>
        <dbReference type="ChEBI" id="CHEBI:30616"/>
        <dbReference type="ChEBI" id="CHEBI:43474"/>
        <dbReference type="ChEBI" id="CHEBI:57932"/>
        <dbReference type="ChEBI" id="CHEBI:456216"/>
        <dbReference type="EC" id="7.4.2.11"/>
    </reaction>
</comment>
<comment type="subunit">
    <text evidence="1">The complex is composed of two ATP-binding proteins (MetN), two transmembrane proteins (MetI) and a solute-binding protein (MetQ).</text>
</comment>
<comment type="subcellular location">
    <subcellularLocation>
        <location evidence="1">Cell inner membrane</location>
        <topology evidence="1">Peripheral membrane protein</topology>
    </subcellularLocation>
</comment>
<comment type="similarity">
    <text evidence="1">Belongs to the ABC transporter superfamily. Methionine importer (TC 3.A.1.24) family.</text>
</comment>
<gene>
    <name evidence="1" type="primary">metN</name>
    <name type="ordered locus">PD_1804</name>
</gene>
<name>METN_XYLFT</name>